<evidence type="ECO:0000255" key="1">
    <source>
        <dbReference type="HAMAP-Rule" id="MF_00285"/>
    </source>
</evidence>
<accession>B5FNE0</accession>
<protein>
    <recommendedName>
        <fullName evidence="1">Potassium-transporting ATPase ATP-binding subunit</fullName>
        <ecNumber evidence="1">7.2.2.6</ecNumber>
    </recommendedName>
    <alternativeName>
        <fullName evidence="1">ATP phosphohydrolase [potassium-transporting] B chain</fullName>
    </alternativeName>
    <alternativeName>
        <fullName evidence="1">Potassium-binding and translocating subunit B</fullName>
    </alternativeName>
    <alternativeName>
        <fullName evidence="1">Potassium-translocating ATPase B chain</fullName>
    </alternativeName>
</protein>
<gene>
    <name evidence="1" type="primary">kdpB</name>
    <name type="ordered locus">SeD_A0813</name>
</gene>
<comment type="function">
    <text evidence="1">Part of the high-affinity ATP-driven potassium transport (or Kdp) system, which catalyzes the hydrolysis of ATP coupled with the electrogenic transport of potassium into the cytoplasm. This subunit is responsible for energy coupling to the transport system and for the release of the potassium ions to the cytoplasm.</text>
</comment>
<comment type="catalytic activity">
    <reaction evidence="1">
        <text>K(+)(out) + ATP + H2O = K(+)(in) + ADP + phosphate + H(+)</text>
        <dbReference type="Rhea" id="RHEA:16777"/>
        <dbReference type="ChEBI" id="CHEBI:15377"/>
        <dbReference type="ChEBI" id="CHEBI:15378"/>
        <dbReference type="ChEBI" id="CHEBI:29103"/>
        <dbReference type="ChEBI" id="CHEBI:30616"/>
        <dbReference type="ChEBI" id="CHEBI:43474"/>
        <dbReference type="ChEBI" id="CHEBI:456216"/>
        <dbReference type="EC" id="7.2.2.6"/>
    </reaction>
    <physiologicalReaction direction="left-to-right" evidence="1">
        <dbReference type="Rhea" id="RHEA:16778"/>
    </physiologicalReaction>
</comment>
<comment type="subunit">
    <text evidence="1">The system is composed of three essential subunits: KdpA, KdpB and KdpC.</text>
</comment>
<comment type="subcellular location">
    <subcellularLocation>
        <location evidence="1">Cell inner membrane</location>
        <topology evidence="1">Multi-pass membrane protein</topology>
    </subcellularLocation>
</comment>
<comment type="similarity">
    <text evidence="1">Belongs to the cation transport ATPase (P-type) (TC 3.A.3) family. Type IA subfamily.</text>
</comment>
<sequence length="682" mass="72174">MSRKQLALFEPVLLVQALTDAVKKLSPRAQWRNPVMFVVWAGSVLTTLLTLAMVTGQIAGSALFTGIISLWLWFTVLFANFAEALAEGRSKAQANSLKGVKKTAFARRLRAPRHDAQADNVPAAELRKGDIVLVKAGDIIPCDGEVIEGGASVDESAITGESAPVIRESGGDFASVTGGTRILSDWLVIACSVNPGETFLDRMIAMVEGAQRRKTPNEIALTILLIALTIVFLLATATLWPFSAWGGNAVSVTVLVALLVCLIPTTIGGLLSAIGVAGMSRMLGANVIATSGRAVEAAGDVDVLLLDKTGTITLGNRQASDFIPARGVDERTLADAAQLASLADETPEGRSIVILAKQRFNLRERDVQSLHATFVPFTAQSRMSGINIDNRMIRKGSVDAIRRHVESNGGHFPADVEQNVENVARLGATPLVVVEGARVLGVIALKDIVKGGIKERFAQLRKMGIKTVMITGDNRLTAAAIAAEAGVDDFLAEATPEAKLALIRQYQAEGRLVAMTGDGTNDAPALAQADVAVAMNSGTQAAKEAGNMVDLDSNPTKLIEVVHIGKQMLMTRGSLTTFSIANDVAKYFAIIPAAFAATYPQLNALNVMGLHSPNSAILSAVIFNALIIIFLIPLALKGVSYKPLSASAMLRRNLWIYGLGGLLVPFIGIKVIDVLLTLLGLA</sequence>
<keyword id="KW-0067">ATP-binding</keyword>
<keyword id="KW-0997">Cell inner membrane</keyword>
<keyword id="KW-1003">Cell membrane</keyword>
<keyword id="KW-0406">Ion transport</keyword>
<keyword id="KW-0460">Magnesium</keyword>
<keyword id="KW-0472">Membrane</keyword>
<keyword id="KW-0479">Metal-binding</keyword>
<keyword id="KW-0547">Nucleotide-binding</keyword>
<keyword id="KW-0597">Phosphoprotein</keyword>
<keyword id="KW-0630">Potassium</keyword>
<keyword id="KW-0633">Potassium transport</keyword>
<keyword id="KW-1278">Translocase</keyword>
<keyword id="KW-0812">Transmembrane</keyword>
<keyword id="KW-1133">Transmembrane helix</keyword>
<keyword id="KW-0813">Transport</keyword>
<dbReference type="EC" id="7.2.2.6" evidence="1"/>
<dbReference type="EMBL" id="CP001144">
    <property type="protein sequence ID" value="ACH77311.1"/>
    <property type="molecule type" value="Genomic_DNA"/>
</dbReference>
<dbReference type="RefSeq" id="WP_000088025.1">
    <property type="nucleotide sequence ID" value="NC_011205.1"/>
</dbReference>
<dbReference type="SMR" id="B5FNE0"/>
<dbReference type="KEGG" id="sed:SeD_A0813"/>
<dbReference type="HOGENOM" id="CLU_025728_2_0_6"/>
<dbReference type="Proteomes" id="UP000008322">
    <property type="component" value="Chromosome"/>
</dbReference>
<dbReference type="GO" id="GO:0005886">
    <property type="term" value="C:plasma membrane"/>
    <property type="evidence" value="ECO:0007669"/>
    <property type="project" value="UniProtKB-SubCell"/>
</dbReference>
<dbReference type="GO" id="GO:0005524">
    <property type="term" value="F:ATP binding"/>
    <property type="evidence" value="ECO:0007669"/>
    <property type="project" value="UniProtKB-UniRule"/>
</dbReference>
<dbReference type="GO" id="GO:0016887">
    <property type="term" value="F:ATP hydrolysis activity"/>
    <property type="evidence" value="ECO:0007669"/>
    <property type="project" value="InterPro"/>
</dbReference>
<dbReference type="GO" id="GO:0000287">
    <property type="term" value="F:magnesium ion binding"/>
    <property type="evidence" value="ECO:0007669"/>
    <property type="project" value="UniProtKB-UniRule"/>
</dbReference>
<dbReference type="GO" id="GO:0008556">
    <property type="term" value="F:P-type potassium transmembrane transporter activity"/>
    <property type="evidence" value="ECO:0007669"/>
    <property type="project" value="UniProtKB-UniRule"/>
</dbReference>
<dbReference type="CDD" id="cd02078">
    <property type="entry name" value="P-type_ATPase_K"/>
    <property type="match status" value="1"/>
</dbReference>
<dbReference type="FunFam" id="2.70.150.10:FF:000010">
    <property type="entry name" value="Potassium-transporting ATPase ATP-binding subunit"/>
    <property type="match status" value="1"/>
</dbReference>
<dbReference type="FunFam" id="3.40.1110.10:FF:000007">
    <property type="entry name" value="Potassium-transporting ATPase ATP-binding subunit"/>
    <property type="match status" value="1"/>
</dbReference>
<dbReference type="Gene3D" id="3.40.1110.10">
    <property type="entry name" value="Calcium-transporting ATPase, cytoplasmic domain N"/>
    <property type="match status" value="1"/>
</dbReference>
<dbReference type="Gene3D" id="2.70.150.10">
    <property type="entry name" value="Calcium-transporting ATPase, cytoplasmic transduction domain A"/>
    <property type="match status" value="1"/>
</dbReference>
<dbReference type="Gene3D" id="3.40.50.1000">
    <property type="entry name" value="HAD superfamily/HAD-like"/>
    <property type="match status" value="1"/>
</dbReference>
<dbReference type="HAMAP" id="MF_00285">
    <property type="entry name" value="KdpB"/>
    <property type="match status" value="1"/>
</dbReference>
<dbReference type="InterPro" id="IPR023299">
    <property type="entry name" value="ATPase_P-typ_cyto_dom_N"/>
</dbReference>
<dbReference type="InterPro" id="IPR018303">
    <property type="entry name" value="ATPase_P-typ_P_site"/>
</dbReference>
<dbReference type="InterPro" id="IPR023298">
    <property type="entry name" value="ATPase_P-typ_TM_dom_sf"/>
</dbReference>
<dbReference type="InterPro" id="IPR008250">
    <property type="entry name" value="ATPase_P-typ_transduc_dom_A_sf"/>
</dbReference>
<dbReference type="InterPro" id="IPR036412">
    <property type="entry name" value="HAD-like_sf"/>
</dbReference>
<dbReference type="InterPro" id="IPR023214">
    <property type="entry name" value="HAD_sf"/>
</dbReference>
<dbReference type="InterPro" id="IPR006391">
    <property type="entry name" value="P-type_ATPase_bsu_IA"/>
</dbReference>
<dbReference type="InterPro" id="IPR001757">
    <property type="entry name" value="P_typ_ATPase"/>
</dbReference>
<dbReference type="InterPro" id="IPR044492">
    <property type="entry name" value="P_typ_ATPase_HD_dom"/>
</dbReference>
<dbReference type="NCBIfam" id="TIGR01494">
    <property type="entry name" value="ATPase_P-type"/>
    <property type="match status" value="2"/>
</dbReference>
<dbReference type="NCBIfam" id="TIGR01497">
    <property type="entry name" value="kdpB"/>
    <property type="match status" value="1"/>
</dbReference>
<dbReference type="PANTHER" id="PTHR43743">
    <property type="entry name" value="POTASSIUM-TRANSPORTING ATPASE ATP-BINDING SUBUNIT"/>
    <property type="match status" value="1"/>
</dbReference>
<dbReference type="PANTHER" id="PTHR43743:SF1">
    <property type="entry name" value="POTASSIUM-TRANSPORTING ATPASE ATP-BINDING SUBUNIT"/>
    <property type="match status" value="1"/>
</dbReference>
<dbReference type="Pfam" id="PF00122">
    <property type="entry name" value="E1-E2_ATPase"/>
    <property type="match status" value="1"/>
</dbReference>
<dbReference type="Pfam" id="PF00702">
    <property type="entry name" value="Hydrolase"/>
    <property type="match status" value="1"/>
</dbReference>
<dbReference type="PRINTS" id="PR00119">
    <property type="entry name" value="CATATPASE"/>
</dbReference>
<dbReference type="SFLD" id="SFLDS00003">
    <property type="entry name" value="Haloacid_Dehalogenase"/>
    <property type="match status" value="1"/>
</dbReference>
<dbReference type="SFLD" id="SFLDF00027">
    <property type="entry name" value="p-type_atpase"/>
    <property type="match status" value="1"/>
</dbReference>
<dbReference type="SUPFAM" id="SSF81653">
    <property type="entry name" value="Calcium ATPase, transduction domain A"/>
    <property type="match status" value="1"/>
</dbReference>
<dbReference type="SUPFAM" id="SSF81665">
    <property type="entry name" value="Calcium ATPase, transmembrane domain M"/>
    <property type="match status" value="1"/>
</dbReference>
<dbReference type="SUPFAM" id="SSF56784">
    <property type="entry name" value="HAD-like"/>
    <property type="match status" value="1"/>
</dbReference>
<dbReference type="SUPFAM" id="SSF81660">
    <property type="entry name" value="Metal cation-transporting ATPase, ATP-binding domain N"/>
    <property type="match status" value="1"/>
</dbReference>
<dbReference type="PROSITE" id="PS00154">
    <property type="entry name" value="ATPASE_E1_E2"/>
    <property type="match status" value="1"/>
</dbReference>
<proteinExistence type="inferred from homology"/>
<organism>
    <name type="scientific">Salmonella dublin (strain CT_02021853)</name>
    <dbReference type="NCBI Taxonomy" id="439851"/>
    <lineage>
        <taxon>Bacteria</taxon>
        <taxon>Pseudomonadati</taxon>
        <taxon>Pseudomonadota</taxon>
        <taxon>Gammaproteobacteria</taxon>
        <taxon>Enterobacterales</taxon>
        <taxon>Enterobacteriaceae</taxon>
        <taxon>Salmonella</taxon>
    </lineage>
</organism>
<feature type="chain" id="PRO_1000114958" description="Potassium-transporting ATPase ATP-binding subunit">
    <location>
        <begin position="1"/>
        <end position="682"/>
    </location>
</feature>
<feature type="transmembrane region" description="Helical" evidence="1">
    <location>
        <begin position="34"/>
        <end position="54"/>
    </location>
</feature>
<feature type="transmembrane region" description="Helical" evidence="1">
    <location>
        <begin position="58"/>
        <end position="78"/>
    </location>
</feature>
<feature type="transmembrane region" description="Helical" evidence="1">
    <location>
        <begin position="219"/>
        <end position="239"/>
    </location>
</feature>
<feature type="transmembrane region" description="Helical" evidence="1">
    <location>
        <begin position="254"/>
        <end position="274"/>
    </location>
</feature>
<feature type="transmembrane region" description="Helical" evidence="1">
    <location>
        <begin position="588"/>
        <end position="608"/>
    </location>
</feature>
<feature type="transmembrane region" description="Helical" evidence="1">
    <location>
        <begin position="616"/>
        <end position="636"/>
    </location>
</feature>
<feature type="transmembrane region" description="Helical" evidence="1">
    <location>
        <begin position="662"/>
        <end position="682"/>
    </location>
</feature>
<feature type="active site" description="4-aspartylphosphate intermediate" evidence="1">
    <location>
        <position position="307"/>
    </location>
</feature>
<feature type="binding site" evidence="1">
    <location>
        <position position="344"/>
    </location>
    <ligand>
        <name>ATP</name>
        <dbReference type="ChEBI" id="CHEBI:30616"/>
    </ligand>
</feature>
<feature type="binding site" evidence="1">
    <location>
        <position position="348"/>
    </location>
    <ligand>
        <name>ATP</name>
        <dbReference type="ChEBI" id="CHEBI:30616"/>
    </ligand>
</feature>
<feature type="binding site" evidence="1">
    <location>
        <begin position="377"/>
        <end position="384"/>
    </location>
    <ligand>
        <name>ATP</name>
        <dbReference type="ChEBI" id="CHEBI:30616"/>
    </ligand>
</feature>
<feature type="binding site" evidence="1">
    <location>
        <position position="395"/>
    </location>
    <ligand>
        <name>ATP</name>
        <dbReference type="ChEBI" id="CHEBI:30616"/>
    </ligand>
</feature>
<feature type="binding site" evidence="1">
    <location>
        <position position="518"/>
    </location>
    <ligand>
        <name>Mg(2+)</name>
        <dbReference type="ChEBI" id="CHEBI:18420"/>
    </ligand>
</feature>
<feature type="binding site" evidence="1">
    <location>
        <position position="522"/>
    </location>
    <ligand>
        <name>Mg(2+)</name>
        <dbReference type="ChEBI" id="CHEBI:18420"/>
    </ligand>
</feature>
<name>KDPB_SALDC</name>
<reference key="1">
    <citation type="journal article" date="2011" name="J. Bacteriol.">
        <title>Comparative genomics of 28 Salmonella enterica isolates: evidence for CRISPR-mediated adaptive sublineage evolution.</title>
        <authorList>
            <person name="Fricke W.F."/>
            <person name="Mammel M.K."/>
            <person name="McDermott P.F."/>
            <person name="Tartera C."/>
            <person name="White D.G."/>
            <person name="Leclerc J.E."/>
            <person name="Ravel J."/>
            <person name="Cebula T.A."/>
        </authorList>
    </citation>
    <scope>NUCLEOTIDE SEQUENCE [LARGE SCALE GENOMIC DNA]</scope>
    <source>
        <strain>CT_02021853</strain>
    </source>
</reference>